<keyword id="KW-0877">Alternative promoter usage</keyword>
<keyword id="KW-0025">Alternative splicing</keyword>
<keyword id="KW-1003">Cell membrane</keyword>
<keyword id="KW-1015">Disulfide bond</keyword>
<keyword id="KW-0297">G-protein coupled receptor</keyword>
<keyword id="KW-0325">Glycoprotein</keyword>
<keyword id="KW-0472">Membrane</keyword>
<keyword id="KW-0675">Receptor</keyword>
<keyword id="KW-1185">Reference proteome</keyword>
<keyword id="KW-0807">Transducer</keyword>
<keyword id="KW-0812">Transmembrane</keyword>
<keyword id="KW-1133">Transmembrane helix</keyword>
<reference key="1">
    <citation type="journal article" date="1998" name="Science">
        <title>Genome sequence of the nematode C. elegans: a platform for investigating biology.</title>
        <authorList>
            <consortium name="The C. elegans sequencing consortium"/>
        </authorList>
    </citation>
    <scope>NUCLEOTIDE SEQUENCE [LARGE SCALE GENOMIC DNA]</scope>
    <scope>ALTERNATIVE SPLICING</scope>
    <source>
        <strain>Bristol N2</strain>
    </source>
</reference>
<reference key="2">
    <citation type="journal article" date="2002" name="J. Neurochem.">
        <title>Characterization of a tyramine receptor from Caenorhabditis elegans.</title>
        <authorList>
            <person name="Rex E."/>
            <person name="Komuniecki R.W."/>
        </authorList>
    </citation>
    <scope>NUCLEOTIDE SEQUENCE [MRNA] OF 12-455 (ISOFORMS A/B AND E/G)</scope>
    <scope>FUNCTION</scope>
    <scope>ALTERNATIVE SPLICING</scope>
</reference>
<reference key="3">
    <citation type="journal article" date="2003" name="Dev. Biol.">
        <title>LIM homeobox gene-dependent expression of biogenic amine receptors in restricted regions of the C. elegans nervous system.</title>
        <authorList>
            <person name="Tsalik E.L."/>
            <person name="Niacaris T."/>
            <person name="Wenick A.S."/>
            <person name="Pau K."/>
            <person name="Avery L."/>
            <person name="Hobert O."/>
        </authorList>
    </citation>
    <scope>ALTERNATIVE PROMOTER USAGE</scope>
    <scope>ALTERNATIVE SPLICING</scope>
    <scope>TISSUE SPECIFICITY</scope>
    <scope>MUTAGENESIS OF ASP-155 AND ALA-368</scope>
    <scope>DISRUPTION PHENOTYPE</scope>
</reference>
<organism>
    <name type="scientific">Caenorhabditis elegans</name>
    <dbReference type="NCBI Taxonomy" id="6239"/>
    <lineage>
        <taxon>Eukaryota</taxon>
        <taxon>Metazoa</taxon>
        <taxon>Ecdysozoa</taxon>
        <taxon>Nematoda</taxon>
        <taxon>Chromadorea</taxon>
        <taxon>Rhabditida</taxon>
        <taxon>Rhabditina</taxon>
        <taxon>Rhabditomorpha</taxon>
        <taxon>Rhabditoidea</taxon>
        <taxon>Rhabditidae</taxon>
        <taxon>Peloderinae</taxon>
        <taxon>Caenorhabditis</taxon>
    </lineage>
</organism>
<comment type="function">
    <text evidence="3">G-protein coupled receptor for tyramine, a known neurotransmitter and neuromodulator and direct precursor of octopamine. The rank order of potency is tyramine &gt; octopamine &gt; dopamine &gt; serotonin &gt; epinephrine = norepinephrine.</text>
</comment>
<comment type="subcellular location">
    <subcellularLocation>
        <location>Cell membrane</location>
        <topology>Multi-pass membrane protein</topology>
    </subcellularLocation>
</comment>
<comment type="alternative products">
    <event type="alternative promoter"/>
    <event type="alternative splicing"/>
    <isoform>
        <id>O02213-5</id>
        <name>e</name>
        <sequence type="displayed"/>
    </isoform>
    <isoform>
        <id>O02213-1</id>
        <name>a</name>
        <sequence type="described" ref="VSP_001920"/>
    </isoform>
    <isoform>
        <id>O02213-2</id>
        <name>b</name>
        <sequence type="described" ref="VSP_011787 VSP_001920"/>
    </isoform>
    <isoform>
        <id>O02213-3</id>
        <name>c</name>
        <sequence type="described" ref="VSP_011787 VSP_011789 VSP_011790"/>
    </isoform>
    <isoform>
        <id>O02213-4</id>
        <name>d</name>
        <sequence type="described" ref="VSP_011788 VSP_011789 VSP_011790"/>
    </isoform>
    <isoform>
        <id>O02213-6</id>
        <name>g</name>
        <sequence type="described" ref="VSP_011787"/>
    </isoform>
    <text>Additional isoforms seem to exist.</text>
</comment>
<comment type="tissue specificity">
    <text evidence="4">The different isoforms are expressed in specific, but overlapping sets of sensory, inter- and motor neurons, including AIY, AIZ and RIA interneurons. They are also expressed in pharyngeal cells, head muscles and excretory gland cells.</text>
</comment>
<comment type="disruption phenotype">
    <text evidence="4">A loss-of-function mutation does not affect the development of AIY interneurons, or lead to egg-laying or any other behavioral defects.</text>
</comment>
<comment type="miscellaneous">
    <molecule>Isoform e</molecule>
    <text>Produced by alternative promoter usage.</text>
</comment>
<comment type="miscellaneous">
    <molecule>Isoform a</molecule>
    <text evidence="5">Produced by alternative splicing of isoform e.</text>
</comment>
<comment type="miscellaneous">
    <molecule>Isoform b</molecule>
    <text evidence="5">Produced by alternative splicing of isoform g.</text>
</comment>
<comment type="miscellaneous">
    <molecule>Isoform c</molecule>
    <text evidence="5">Produced by alternative splicing of isoform g.</text>
</comment>
<comment type="miscellaneous">
    <molecule>Isoform d</molecule>
    <text evidence="5">Produced by alternative promoter usage.</text>
</comment>
<comment type="miscellaneous">
    <molecule>Isoform g</molecule>
    <text evidence="5">Produced by alternative promoter usage.</text>
</comment>
<comment type="similarity">
    <text evidence="2">Belongs to the G-protein coupled receptor 1 family.</text>
</comment>
<dbReference type="EMBL" id="Z81031">
    <property type="protein sequence ID" value="CAB02718.4"/>
    <property type="molecule type" value="Genomic_DNA"/>
</dbReference>
<dbReference type="EMBL" id="Z81031">
    <property type="protein sequence ID" value="CAF31464.1"/>
    <property type="molecule type" value="Genomic_DNA"/>
</dbReference>
<dbReference type="EMBL" id="Z81031">
    <property type="protein sequence ID" value="CAF31465.2"/>
    <property type="molecule type" value="Genomic_DNA"/>
</dbReference>
<dbReference type="EMBL" id="Z81031">
    <property type="protein sequence ID" value="CAF31466.2"/>
    <property type="molecule type" value="Genomic_DNA"/>
</dbReference>
<dbReference type="EMBL" id="Z81031">
    <property type="protein sequence ID" value="CAF31467.1"/>
    <property type="molecule type" value="Genomic_DNA"/>
</dbReference>
<dbReference type="EMBL" id="AF539813">
    <property type="protein sequence ID" value="AAN16458.1"/>
    <property type="molecule type" value="mRNA"/>
</dbReference>
<dbReference type="EMBL" id="AF539814">
    <property type="protein sequence ID" value="AAN16459.1"/>
    <property type="molecule type" value="mRNA"/>
</dbReference>
<dbReference type="PIR" id="T18863">
    <property type="entry name" value="T18863"/>
</dbReference>
<dbReference type="RefSeq" id="NP_001024335.1">
    <molecule id="O02213-1"/>
    <property type="nucleotide sequence ID" value="NM_001029164.3"/>
</dbReference>
<dbReference type="RefSeq" id="NP_001024336.1">
    <molecule id="O02213-2"/>
    <property type="nucleotide sequence ID" value="NM_001029165.5"/>
</dbReference>
<dbReference type="RefSeq" id="NP_001024337.1">
    <molecule id="O02213-3"/>
    <property type="nucleotide sequence ID" value="NM_001029166.1"/>
</dbReference>
<dbReference type="RefSeq" id="NP_001024338.1">
    <molecule id="O02213-4"/>
    <property type="nucleotide sequence ID" value="NM_001029167.1"/>
</dbReference>
<dbReference type="RefSeq" id="NP_001024339.1">
    <molecule id="O02213-5"/>
    <property type="nucleotide sequence ID" value="NM_001029168.4"/>
</dbReference>
<dbReference type="SMR" id="O02213"/>
<dbReference type="FunCoup" id="O02213">
    <property type="interactions" value="170"/>
</dbReference>
<dbReference type="STRING" id="6239.C02D4.2e.1"/>
<dbReference type="GlyCosmos" id="O02213">
    <property type="glycosylation" value="2 sites, No reported glycans"/>
</dbReference>
<dbReference type="PaxDb" id="6239-C02D4.2e"/>
<dbReference type="EnsemblMetazoa" id="C02D4.2a.1">
    <molecule id="O02213-1"/>
    <property type="protein sequence ID" value="C02D4.2a.1"/>
    <property type="gene ID" value="WBGene00004777"/>
</dbReference>
<dbReference type="EnsemblMetazoa" id="C02D4.2b.1">
    <molecule id="O02213-2"/>
    <property type="protein sequence ID" value="C02D4.2b.1"/>
    <property type="gene ID" value="WBGene00004777"/>
</dbReference>
<dbReference type="EnsemblMetazoa" id="C02D4.2c.1">
    <molecule id="O02213-3"/>
    <property type="protein sequence ID" value="C02D4.2c.1"/>
    <property type="gene ID" value="WBGene00004777"/>
</dbReference>
<dbReference type="EnsemblMetazoa" id="C02D4.2d.1">
    <molecule id="O02213-4"/>
    <property type="protein sequence ID" value="C02D4.2d.1"/>
    <property type="gene ID" value="WBGene00004777"/>
</dbReference>
<dbReference type="EnsemblMetazoa" id="C02D4.2e.1">
    <molecule id="O02213-5"/>
    <property type="protein sequence ID" value="C02D4.2e.1"/>
    <property type="gene ID" value="WBGene00004777"/>
</dbReference>
<dbReference type="GeneID" id="182110"/>
<dbReference type="KEGG" id="cel:CELE_C02D4.2"/>
<dbReference type="UCSC" id="C02D4.2f">
    <molecule id="O02213-1"/>
    <property type="organism name" value="c. elegans"/>
</dbReference>
<dbReference type="AGR" id="WB:WBGene00004777"/>
<dbReference type="CTD" id="182110"/>
<dbReference type="WormBase" id="C02D4.2a">
    <molecule id="O02213-1"/>
    <property type="protein sequence ID" value="CE36088"/>
    <property type="gene ID" value="WBGene00004777"/>
    <property type="gene designation" value="ser-2"/>
</dbReference>
<dbReference type="WormBase" id="C02D4.2b">
    <molecule id="O02213-2"/>
    <property type="protein sequence ID" value="CE36089"/>
    <property type="gene ID" value="WBGene00004777"/>
    <property type="gene designation" value="ser-2"/>
</dbReference>
<dbReference type="WormBase" id="C02D4.2c">
    <molecule id="O02213-3"/>
    <property type="protein sequence ID" value="CE36423"/>
    <property type="gene ID" value="WBGene00004777"/>
    <property type="gene designation" value="ser-2"/>
</dbReference>
<dbReference type="WormBase" id="C02D4.2d">
    <molecule id="O02213-4"/>
    <property type="protein sequence ID" value="CE36424"/>
    <property type="gene ID" value="WBGene00004777"/>
    <property type="gene designation" value="ser-2"/>
</dbReference>
<dbReference type="WormBase" id="C02D4.2e">
    <molecule id="O02213-5"/>
    <property type="protein sequence ID" value="CE36092"/>
    <property type="gene ID" value="WBGene00004777"/>
    <property type="gene designation" value="ser-2"/>
</dbReference>
<dbReference type="eggNOG" id="KOG3656">
    <property type="taxonomic scope" value="Eukaryota"/>
</dbReference>
<dbReference type="GeneTree" id="ENSGT00940000165278"/>
<dbReference type="InParanoid" id="O02213"/>
<dbReference type="OMA" id="CQLFTTA"/>
<dbReference type="OrthoDB" id="10010417at2759"/>
<dbReference type="PhylomeDB" id="O02213"/>
<dbReference type="Reactome" id="R-CEL-390696">
    <property type="pathway name" value="Adrenoceptors"/>
</dbReference>
<dbReference type="Reactome" id="R-CEL-392023">
    <property type="pathway name" value="Adrenaline signalling through Alpha-2 adrenergic receptor"/>
</dbReference>
<dbReference type="Reactome" id="R-CEL-400042">
    <property type="pathway name" value="Adrenaline,noradrenaline inhibits insulin secretion"/>
</dbReference>
<dbReference type="Reactome" id="R-CEL-418594">
    <property type="pathway name" value="G alpha (i) signalling events"/>
</dbReference>
<dbReference type="Reactome" id="R-CEL-418597">
    <property type="pathway name" value="G alpha (z) signalling events"/>
</dbReference>
<dbReference type="PRO" id="PR:O02213"/>
<dbReference type="Proteomes" id="UP000001940">
    <property type="component" value="Chromosome X"/>
</dbReference>
<dbReference type="Bgee" id="WBGene00004777">
    <property type="expression patterns" value="Expressed in larva and 3 other cell types or tissues"/>
</dbReference>
<dbReference type="ExpressionAtlas" id="O02213">
    <property type="expression patterns" value="baseline and differential"/>
</dbReference>
<dbReference type="GO" id="GO:0016020">
    <property type="term" value="C:membrane"/>
    <property type="evidence" value="ECO:0000314"/>
    <property type="project" value="UniProtKB"/>
</dbReference>
<dbReference type="GO" id="GO:0005886">
    <property type="term" value="C:plasma membrane"/>
    <property type="evidence" value="ECO:0000314"/>
    <property type="project" value="WormBase"/>
</dbReference>
<dbReference type="GO" id="GO:0008227">
    <property type="term" value="F:G protein-coupled amine receptor activity"/>
    <property type="evidence" value="ECO:0000318"/>
    <property type="project" value="GO_Central"/>
</dbReference>
<dbReference type="GO" id="GO:0004989">
    <property type="term" value="F:octopamine receptor activity"/>
    <property type="evidence" value="ECO:0007669"/>
    <property type="project" value="InterPro"/>
</dbReference>
<dbReference type="GO" id="GO:0008226">
    <property type="term" value="F:tyramine receptor activity"/>
    <property type="evidence" value="ECO:0000314"/>
    <property type="project" value="UniProtKB"/>
</dbReference>
<dbReference type="GO" id="GO:0007212">
    <property type="term" value="P:G protein-coupled dopamine receptor signaling pathway"/>
    <property type="evidence" value="ECO:0000250"/>
    <property type="project" value="WormBase"/>
</dbReference>
<dbReference type="GO" id="GO:0007211">
    <property type="term" value="P:octopamine or tyramine signaling pathway"/>
    <property type="evidence" value="ECO:0000314"/>
    <property type="project" value="UniProtKB"/>
</dbReference>
<dbReference type="CDD" id="cd15060">
    <property type="entry name" value="7tmA_tyramine_octopamine_R-like"/>
    <property type="match status" value="1"/>
</dbReference>
<dbReference type="Gene3D" id="1.20.1070.10">
    <property type="entry name" value="Rhodopsin 7-helix transmembrane proteins"/>
    <property type="match status" value="1"/>
</dbReference>
<dbReference type="InterPro" id="IPR000276">
    <property type="entry name" value="GPCR_Rhodpsn"/>
</dbReference>
<dbReference type="InterPro" id="IPR017452">
    <property type="entry name" value="GPCR_Rhodpsn_7TM"/>
</dbReference>
<dbReference type="InterPro" id="IPR002002">
    <property type="entry name" value="Octopmn_rcpt"/>
</dbReference>
<dbReference type="PANTHER" id="PTHR24248">
    <property type="entry name" value="ADRENERGIC RECEPTOR-RELATED G-PROTEIN COUPLED RECEPTOR"/>
    <property type="match status" value="1"/>
</dbReference>
<dbReference type="PANTHER" id="PTHR24248:SF174">
    <property type="entry name" value="TYRAMINE_OCTOPAMINE RECEPTOR"/>
    <property type="match status" value="1"/>
</dbReference>
<dbReference type="Pfam" id="PF00001">
    <property type="entry name" value="7tm_1"/>
    <property type="match status" value="1"/>
</dbReference>
<dbReference type="PRINTS" id="PR00237">
    <property type="entry name" value="GPCRRHODOPSN"/>
</dbReference>
<dbReference type="PRINTS" id="PR00664">
    <property type="entry name" value="OCTOPAMINER"/>
</dbReference>
<dbReference type="SMART" id="SM01381">
    <property type="entry name" value="7TM_GPCR_Srsx"/>
    <property type="match status" value="1"/>
</dbReference>
<dbReference type="SUPFAM" id="SSF81321">
    <property type="entry name" value="Family A G protein-coupled receptor-like"/>
    <property type="match status" value="1"/>
</dbReference>
<dbReference type="PROSITE" id="PS00237">
    <property type="entry name" value="G_PROTEIN_RECEP_F1_1"/>
    <property type="match status" value="1"/>
</dbReference>
<dbReference type="PROSITE" id="PS50262">
    <property type="entry name" value="G_PROTEIN_RECEP_F1_2"/>
    <property type="match status" value="1"/>
</dbReference>
<accession>O02213</accession>
<accession>Q6LA87</accession>
<accession>Q6LA88</accession>
<accession>Q6LA89</accession>
<accession>Q6LA90</accession>
<proteinExistence type="evidence at protein level"/>
<name>SER2_CAEEL</name>
<evidence type="ECO:0000255" key="1"/>
<evidence type="ECO:0000255" key="2">
    <source>
        <dbReference type="PROSITE-ProRule" id="PRU00521"/>
    </source>
</evidence>
<evidence type="ECO:0000269" key="3">
    <source>
    </source>
</evidence>
<evidence type="ECO:0000269" key="4">
    <source>
    </source>
</evidence>
<evidence type="ECO:0000305" key="5"/>
<gene>
    <name type="primary">ser-2</name>
    <name type="ORF">C02D4.2</name>
</gene>
<protein>
    <recommendedName>
        <fullName>Tyramine receptor Ser-2</fullName>
    </recommendedName>
</protein>
<sequence length="455" mass="50870">MFRNYTDSVQEMVLRAIDSIRDSVINASSAVSTTTLPPLDIPMTSMKPPSIIPTVELVLGTITYLVIIAMTVVGNTLVVVAVFSYRPLKKVQNYFLVSLAASDLAVAIFVMPLHVVTFLAGGKWLLGVTVCQFFTTADILLCTSSILNLCAIALDRYWAIHNPINYAQKRTTKFVCIVIVIVWILSMLISVPPIIGWNNWQENMMEDSCGLSTEKAFVVFSAAGSFFLPLLVMVVVYVKIFISARQRIRTNRGRSALMRIQNAEGDDDYRKMSIKRASVESARTSSRVGEKTPLVIADGQTTVTTLAAHSTDGGSLPKDETTKHMKYHNNGSCKVKVKDVKEDEGNPNPTAVLRKREKISVAKEKRAAKTIAVIIFVFSFCWLPFFVAYVIRPFCETCKLHAKVEQAFTWLGYINSSLNPFLYGILNLEFRRAFKKILCPKAVLEQRRRRMSAQP</sequence>
<feature type="chain" id="PRO_0000070108" description="Tyramine receptor Ser-2">
    <location>
        <begin position="1"/>
        <end position="455"/>
    </location>
</feature>
<feature type="topological domain" description="Extracellular" evidence="1">
    <location>
        <begin position="1"/>
        <end position="60"/>
    </location>
</feature>
<feature type="transmembrane region" description="Helical; Name=1" evidence="1">
    <location>
        <begin position="61"/>
        <end position="83"/>
    </location>
</feature>
<feature type="topological domain" description="Cytoplasmic" evidence="1">
    <location>
        <begin position="84"/>
        <end position="93"/>
    </location>
</feature>
<feature type="transmembrane region" description="Helical; Name=2" evidence="1">
    <location>
        <begin position="94"/>
        <end position="115"/>
    </location>
</feature>
<feature type="topological domain" description="Extracellular" evidence="1">
    <location>
        <begin position="116"/>
        <end position="133"/>
    </location>
</feature>
<feature type="transmembrane region" description="Helical; Name=3" evidence="1">
    <location>
        <begin position="134"/>
        <end position="154"/>
    </location>
</feature>
<feature type="topological domain" description="Cytoplasmic" evidence="1">
    <location>
        <begin position="155"/>
        <end position="174"/>
    </location>
</feature>
<feature type="transmembrane region" description="Helical; Name=4" evidence="1">
    <location>
        <begin position="175"/>
        <end position="197"/>
    </location>
</feature>
<feature type="topological domain" description="Extracellular" evidence="1">
    <location>
        <begin position="198"/>
        <end position="221"/>
    </location>
</feature>
<feature type="transmembrane region" description="Helical; Name=5" evidence="1">
    <location>
        <begin position="222"/>
        <end position="243"/>
    </location>
</feature>
<feature type="topological domain" description="Cytoplasmic" evidence="1">
    <location>
        <begin position="244"/>
        <end position="370"/>
    </location>
</feature>
<feature type="transmembrane region" description="Helical; Name=6" evidence="1">
    <location>
        <begin position="371"/>
        <end position="392"/>
    </location>
</feature>
<feature type="topological domain" description="Extracellular" evidence="1">
    <location>
        <begin position="393"/>
        <end position="407"/>
    </location>
</feature>
<feature type="transmembrane region" description="Helical; Name=7" evidence="1">
    <location>
        <begin position="408"/>
        <end position="428"/>
    </location>
</feature>
<feature type="topological domain" description="Cytoplasmic" evidence="1">
    <location>
        <begin position="429"/>
        <end position="455"/>
    </location>
</feature>
<feature type="glycosylation site" description="N-linked (GlcNAc...) asparagine" evidence="1">
    <location>
        <position position="4"/>
    </location>
</feature>
<feature type="glycosylation site" description="N-linked (GlcNAc...) asparagine" evidence="1">
    <location>
        <position position="26"/>
    </location>
</feature>
<feature type="disulfide bond" evidence="2">
    <location>
        <begin position="131"/>
        <end position="209"/>
    </location>
</feature>
<feature type="splice variant" id="VSP_011788" description="In isoform d." evidence="5">
    <original>MFRNYTDSVQ</original>
    <variation>MSSL</variation>
    <location>
        <begin position="1"/>
        <end position="10"/>
    </location>
</feature>
<feature type="splice variant" id="VSP_011787" description="In isoform b, isoform c and isoform g." evidence="5">
    <original>MFRNYTDSV</original>
    <variation>MNDDFS</variation>
    <location>
        <begin position="1"/>
        <end position="9"/>
    </location>
</feature>
<feature type="splice variant" id="VSP_011789" description="In isoform c and isoform d." evidence="5">
    <original>VWILSMLISVPPIIGWNNWQE</original>
    <variation>SLQSNYGEGKRRRLPSFVMEM</variation>
    <location>
        <begin position="182"/>
        <end position="202"/>
    </location>
</feature>
<feature type="splice variant" id="VSP_011790" description="In isoform c and isoform d." evidence="5">
    <location>
        <begin position="203"/>
        <end position="455"/>
    </location>
</feature>
<feature type="splice variant" id="VSP_001920" description="In isoform a and isoform b." evidence="5">
    <location>
        <begin position="288"/>
        <end position="310"/>
    </location>
</feature>
<feature type="mutagenesis site" description="No obvious behavioral defects." evidence="4">
    <original>D</original>
    <variation>A</variation>
    <location>
        <position position="155"/>
    </location>
</feature>
<feature type="mutagenesis site" description="No obvious behavioral defects." evidence="4">
    <original>A</original>
    <variation>E</variation>
    <location>
        <position position="368"/>
    </location>
</feature>
<feature type="sequence conflict" description="In Ref. 2; AAN16459." evidence="5" ref="2">
    <original>T</original>
    <variation>A</variation>
    <location>
        <position position="71"/>
    </location>
</feature>
<feature type="sequence conflict" description="In Ref. 2; AAN16459." evidence="5" ref="2">
    <original>D</original>
    <variation>V</variation>
    <location>
        <position position="268"/>
    </location>
</feature>